<dbReference type="EC" id="3.6.-.-" evidence="1"/>
<dbReference type="EMBL" id="L42023">
    <property type="protein sequence ID" value="AAC22664.1"/>
    <property type="status" value="ALT_INIT"/>
    <property type="molecule type" value="Genomic_DNA"/>
</dbReference>
<dbReference type="PIR" id="G64107">
    <property type="entry name" value="G64107"/>
</dbReference>
<dbReference type="RefSeq" id="NP_439164.1">
    <property type="nucleotide sequence ID" value="NC_000907.1"/>
</dbReference>
<dbReference type="SMR" id="P43730"/>
<dbReference type="STRING" id="71421.HI_1002"/>
<dbReference type="EnsemblBacteria" id="AAC22664">
    <property type="protein sequence ID" value="AAC22664"/>
    <property type="gene ID" value="HI_1002"/>
</dbReference>
<dbReference type="KEGG" id="hin:HI_1002"/>
<dbReference type="PATRIC" id="fig|71421.8.peg.1045"/>
<dbReference type="eggNOG" id="COG0486">
    <property type="taxonomic scope" value="Bacteria"/>
</dbReference>
<dbReference type="HOGENOM" id="CLU_019624_4_1_6"/>
<dbReference type="OrthoDB" id="9805918at2"/>
<dbReference type="Proteomes" id="UP000000579">
    <property type="component" value="Chromosome"/>
</dbReference>
<dbReference type="GO" id="GO:0005737">
    <property type="term" value="C:cytoplasm"/>
    <property type="evidence" value="ECO:0000318"/>
    <property type="project" value="GO_Central"/>
</dbReference>
<dbReference type="GO" id="GO:0005829">
    <property type="term" value="C:cytosol"/>
    <property type="evidence" value="ECO:0000318"/>
    <property type="project" value="GO_Central"/>
</dbReference>
<dbReference type="GO" id="GO:0005525">
    <property type="term" value="F:GTP binding"/>
    <property type="evidence" value="ECO:0007669"/>
    <property type="project" value="UniProtKB-UniRule"/>
</dbReference>
<dbReference type="GO" id="GO:0003924">
    <property type="term" value="F:GTPase activity"/>
    <property type="evidence" value="ECO:0007669"/>
    <property type="project" value="UniProtKB-UniRule"/>
</dbReference>
<dbReference type="GO" id="GO:0046872">
    <property type="term" value="F:metal ion binding"/>
    <property type="evidence" value="ECO:0007669"/>
    <property type="project" value="UniProtKB-KW"/>
</dbReference>
<dbReference type="GO" id="GO:0030488">
    <property type="term" value="P:tRNA methylation"/>
    <property type="evidence" value="ECO:0000318"/>
    <property type="project" value="GO_Central"/>
</dbReference>
<dbReference type="GO" id="GO:0002098">
    <property type="term" value="P:tRNA wobble uridine modification"/>
    <property type="evidence" value="ECO:0000318"/>
    <property type="project" value="GO_Central"/>
</dbReference>
<dbReference type="CDD" id="cd04164">
    <property type="entry name" value="trmE"/>
    <property type="match status" value="1"/>
</dbReference>
<dbReference type="CDD" id="cd14858">
    <property type="entry name" value="TrmE_N"/>
    <property type="match status" value="1"/>
</dbReference>
<dbReference type="FunFam" id="3.30.1360.120:FF:000001">
    <property type="entry name" value="tRNA modification GTPase MnmE"/>
    <property type="match status" value="1"/>
</dbReference>
<dbReference type="FunFam" id="3.40.50.300:FF:000249">
    <property type="entry name" value="tRNA modification GTPase MnmE"/>
    <property type="match status" value="1"/>
</dbReference>
<dbReference type="Gene3D" id="3.40.50.300">
    <property type="entry name" value="P-loop containing nucleotide triphosphate hydrolases"/>
    <property type="match status" value="1"/>
</dbReference>
<dbReference type="Gene3D" id="3.30.1360.120">
    <property type="entry name" value="Probable tRNA modification gtpase trme, domain 1"/>
    <property type="match status" value="1"/>
</dbReference>
<dbReference type="Gene3D" id="1.20.120.430">
    <property type="entry name" value="tRNA modification GTPase MnmE domain 2"/>
    <property type="match status" value="1"/>
</dbReference>
<dbReference type="HAMAP" id="MF_00379">
    <property type="entry name" value="GTPase_MnmE"/>
    <property type="match status" value="1"/>
</dbReference>
<dbReference type="InterPro" id="IPR031168">
    <property type="entry name" value="G_TrmE"/>
</dbReference>
<dbReference type="InterPro" id="IPR006073">
    <property type="entry name" value="GTP-bd"/>
</dbReference>
<dbReference type="InterPro" id="IPR018948">
    <property type="entry name" value="GTP-bd_TrmE_N"/>
</dbReference>
<dbReference type="InterPro" id="IPR004520">
    <property type="entry name" value="GTPase_MnmE"/>
</dbReference>
<dbReference type="InterPro" id="IPR027368">
    <property type="entry name" value="MnmE_dom2"/>
</dbReference>
<dbReference type="InterPro" id="IPR025867">
    <property type="entry name" value="MnmE_helical"/>
</dbReference>
<dbReference type="InterPro" id="IPR027417">
    <property type="entry name" value="P-loop_NTPase"/>
</dbReference>
<dbReference type="InterPro" id="IPR005225">
    <property type="entry name" value="Small_GTP-bd"/>
</dbReference>
<dbReference type="InterPro" id="IPR027266">
    <property type="entry name" value="TrmE/GcvT_dom1"/>
</dbReference>
<dbReference type="NCBIfam" id="TIGR00450">
    <property type="entry name" value="mnmE_trmE_thdF"/>
    <property type="match status" value="1"/>
</dbReference>
<dbReference type="NCBIfam" id="NF003661">
    <property type="entry name" value="PRK05291.1-3"/>
    <property type="match status" value="1"/>
</dbReference>
<dbReference type="NCBIfam" id="TIGR00231">
    <property type="entry name" value="small_GTP"/>
    <property type="match status" value="1"/>
</dbReference>
<dbReference type="PANTHER" id="PTHR42714">
    <property type="entry name" value="TRNA MODIFICATION GTPASE GTPBP3"/>
    <property type="match status" value="1"/>
</dbReference>
<dbReference type="PANTHER" id="PTHR42714:SF2">
    <property type="entry name" value="TRNA MODIFICATION GTPASE GTPBP3, MITOCHONDRIAL"/>
    <property type="match status" value="1"/>
</dbReference>
<dbReference type="Pfam" id="PF01926">
    <property type="entry name" value="MMR_HSR1"/>
    <property type="match status" value="1"/>
</dbReference>
<dbReference type="Pfam" id="PF12631">
    <property type="entry name" value="MnmE_helical"/>
    <property type="match status" value="1"/>
</dbReference>
<dbReference type="Pfam" id="PF10396">
    <property type="entry name" value="TrmE_N"/>
    <property type="match status" value="1"/>
</dbReference>
<dbReference type="SUPFAM" id="SSF52540">
    <property type="entry name" value="P-loop containing nucleoside triphosphate hydrolases"/>
    <property type="match status" value="1"/>
</dbReference>
<dbReference type="SUPFAM" id="SSF116878">
    <property type="entry name" value="TrmE connector domain"/>
    <property type="match status" value="1"/>
</dbReference>
<dbReference type="PROSITE" id="PS51709">
    <property type="entry name" value="G_TRME"/>
    <property type="match status" value="1"/>
</dbReference>
<accession>P43730</accession>
<reference key="1">
    <citation type="journal article" date="1995" name="Science">
        <title>Whole-genome random sequencing and assembly of Haemophilus influenzae Rd.</title>
        <authorList>
            <person name="Fleischmann R.D."/>
            <person name="Adams M.D."/>
            <person name="White O."/>
            <person name="Clayton R.A."/>
            <person name="Kirkness E.F."/>
            <person name="Kerlavage A.R."/>
            <person name="Bult C.J."/>
            <person name="Tomb J.-F."/>
            <person name="Dougherty B.A."/>
            <person name="Merrick J.M."/>
            <person name="McKenney K."/>
            <person name="Sutton G.G."/>
            <person name="FitzHugh W."/>
            <person name="Fields C.A."/>
            <person name="Gocayne J.D."/>
            <person name="Scott J.D."/>
            <person name="Shirley R."/>
            <person name="Liu L.-I."/>
            <person name="Glodek A."/>
            <person name="Kelley J.M."/>
            <person name="Weidman J.F."/>
            <person name="Phillips C.A."/>
            <person name="Spriggs T."/>
            <person name="Hedblom E."/>
            <person name="Cotton M.D."/>
            <person name="Utterback T.R."/>
            <person name="Hanna M.C."/>
            <person name="Nguyen D.T."/>
            <person name="Saudek D.M."/>
            <person name="Brandon R.C."/>
            <person name="Fine L.D."/>
            <person name="Fritchman J.L."/>
            <person name="Fuhrmann J.L."/>
            <person name="Geoghagen N.S.M."/>
            <person name="Gnehm C.L."/>
            <person name="McDonald L.A."/>
            <person name="Small K.V."/>
            <person name="Fraser C.M."/>
            <person name="Smith H.O."/>
            <person name="Venter J.C."/>
        </authorList>
    </citation>
    <scope>NUCLEOTIDE SEQUENCE [LARGE SCALE GENOMIC DNA]</scope>
    <source>
        <strain>ATCC 51907 / DSM 11121 / KW20 / Rd</strain>
    </source>
</reference>
<proteinExistence type="inferred from homology"/>
<comment type="function">
    <text evidence="1">Exhibits a very high intrinsic GTPase hydrolysis rate. Involved in the addition of a carboxymethylaminomethyl (cmnm) group at the wobble position (U34) of certain tRNAs, forming tRNA-cmnm(5)s(2)U34.</text>
</comment>
<comment type="cofactor">
    <cofactor evidence="1">
        <name>K(+)</name>
        <dbReference type="ChEBI" id="CHEBI:29103"/>
    </cofactor>
    <text evidence="1">Binds 1 potassium ion per subunit.</text>
</comment>
<comment type="subunit">
    <text evidence="1">Homodimer. Heterotetramer of two MnmE and two MnmG subunits.</text>
</comment>
<comment type="subcellular location">
    <subcellularLocation>
        <location evidence="1">Cytoplasm</location>
    </subcellularLocation>
</comment>
<comment type="similarity">
    <text evidence="1">Belongs to the TRAFAC class TrmE-Era-EngA-EngB-Septin-like GTPase superfamily. TrmE GTPase family.</text>
</comment>
<comment type="sequence caution" evidence="2">
    <conflict type="erroneous initiation">
        <sequence resource="EMBL-CDS" id="AAC22664"/>
    </conflict>
</comment>
<keyword id="KW-0963">Cytoplasm</keyword>
<keyword id="KW-0342">GTP-binding</keyword>
<keyword id="KW-0378">Hydrolase</keyword>
<keyword id="KW-0460">Magnesium</keyword>
<keyword id="KW-0479">Metal-binding</keyword>
<keyword id="KW-0547">Nucleotide-binding</keyword>
<keyword id="KW-0630">Potassium</keyword>
<keyword id="KW-1185">Reference proteome</keyword>
<keyword id="KW-0819">tRNA processing</keyword>
<sequence length="452" mass="49232">MKETIVAQATAPGRGGIGILRVSGPLATKVAQAILGKCPKPRMADYLPFKDADGTILDQGIALYFKSPNSFTGEDVLELQGHGGQVVLDLLLKRILQIDGIRLARPGEFSEQAFLNDKLDLAQAEAIADLIDATSEQAVRSALKSLQGEFSKKVNELVDSVIYLRTYVEASIDFPDEEIDFLADGKIEANLRGIINQLEDVRSEAKQGSILREGMKVVIAGRPNAGKSSLLNALAGREAAIVTDIAGTTRDVLREHIHIDGMPLHIIDTAGLRDAIDEVERIGISRAWTEIEQADRIILMLDSSDPESADLSKVRSEFLAKLPSTLPVTIVRNKIDLNGEQASESEQGGYQMISLSAQTHDGVQLLREHLKQAMGFQTGMEGGFLARRRHLDALDKAAEHLQIGLVQLTEFHAGELLAEELRLVQSYLSEITGQFTSDDLLGNIFSSFCIGK</sequence>
<protein>
    <recommendedName>
        <fullName evidence="1">tRNA modification GTPase MnmE</fullName>
        <ecNumber evidence="1">3.6.-.-</ecNumber>
    </recommendedName>
</protein>
<feature type="chain" id="PRO_0000188881" description="tRNA modification GTPase MnmE">
    <location>
        <begin position="1"/>
        <end position="452"/>
    </location>
</feature>
<feature type="domain" description="TrmE-type G">
    <location>
        <begin position="214"/>
        <end position="375"/>
    </location>
</feature>
<feature type="binding site" evidence="1">
    <location>
        <position position="21"/>
    </location>
    <ligand>
        <name>(6S)-5-formyl-5,6,7,8-tetrahydrofolate</name>
        <dbReference type="ChEBI" id="CHEBI:57457"/>
    </ligand>
</feature>
<feature type="binding site" evidence="1">
    <location>
        <position position="78"/>
    </location>
    <ligand>
        <name>(6S)-5-formyl-5,6,7,8-tetrahydrofolate</name>
        <dbReference type="ChEBI" id="CHEBI:57457"/>
    </ligand>
</feature>
<feature type="binding site" evidence="1">
    <location>
        <position position="118"/>
    </location>
    <ligand>
        <name>(6S)-5-formyl-5,6,7,8-tetrahydrofolate</name>
        <dbReference type="ChEBI" id="CHEBI:57457"/>
    </ligand>
</feature>
<feature type="binding site" evidence="1">
    <location>
        <begin position="224"/>
        <end position="229"/>
    </location>
    <ligand>
        <name>GTP</name>
        <dbReference type="ChEBI" id="CHEBI:37565"/>
    </ligand>
</feature>
<feature type="binding site" evidence="1">
    <location>
        <position position="224"/>
    </location>
    <ligand>
        <name>K(+)</name>
        <dbReference type="ChEBI" id="CHEBI:29103"/>
    </ligand>
</feature>
<feature type="binding site" evidence="1">
    <location>
        <position position="228"/>
    </location>
    <ligand>
        <name>Mg(2+)</name>
        <dbReference type="ChEBI" id="CHEBI:18420"/>
    </ligand>
</feature>
<feature type="binding site" evidence="1">
    <location>
        <begin position="243"/>
        <end position="249"/>
    </location>
    <ligand>
        <name>GTP</name>
        <dbReference type="ChEBI" id="CHEBI:37565"/>
    </ligand>
</feature>
<feature type="binding site" evidence="1">
    <location>
        <position position="243"/>
    </location>
    <ligand>
        <name>K(+)</name>
        <dbReference type="ChEBI" id="CHEBI:29103"/>
    </ligand>
</feature>
<feature type="binding site" evidence="1">
    <location>
        <position position="245"/>
    </location>
    <ligand>
        <name>K(+)</name>
        <dbReference type="ChEBI" id="CHEBI:29103"/>
    </ligand>
</feature>
<feature type="binding site" evidence="1">
    <location>
        <position position="248"/>
    </location>
    <ligand>
        <name>K(+)</name>
        <dbReference type="ChEBI" id="CHEBI:29103"/>
    </ligand>
</feature>
<feature type="binding site" evidence="1">
    <location>
        <position position="249"/>
    </location>
    <ligand>
        <name>Mg(2+)</name>
        <dbReference type="ChEBI" id="CHEBI:18420"/>
    </ligand>
</feature>
<feature type="binding site" evidence="1">
    <location>
        <begin position="268"/>
        <end position="271"/>
    </location>
    <ligand>
        <name>GTP</name>
        <dbReference type="ChEBI" id="CHEBI:37565"/>
    </ligand>
</feature>
<feature type="binding site" evidence="1">
    <location>
        <position position="452"/>
    </location>
    <ligand>
        <name>(6S)-5-formyl-5,6,7,8-tetrahydrofolate</name>
        <dbReference type="ChEBI" id="CHEBI:57457"/>
    </ligand>
</feature>
<organism>
    <name type="scientific">Haemophilus influenzae (strain ATCC 51907 / DSM 11121 / KW20 / Rd)</name>
    <dbReference type="NCBI Taxonomy" id="71421"/>
    <lineage>
        <taxon>Bacteria</taxon>
        <taxon>Pseudomonadati</taxon>
        <taxon>Pseudomonadota</taxon>
        <taxon>Gammaproteobacteria</taxon>
        <taxon>Pasteurellales</taxon>
        <taxon>Pasteurellaceae</taxon>
        <taxon>Haemophilus</taxon>
    </lineage>
</organism>
<name>MNME_HAEIN</name>
<gene>
    <name evidence="1" type="primary">mnmE</name>
    <name evidence="1" type="synonym">thdF</name>
    <name evidence="1" type="synonym">trmE</name>
    <name type="ordered locus">HI_1002</name>
</gene>
<evidence type="ECO:0000255" key="1">
    <source>
        <dbReference type="HAMAP-Rule" id="MF_00379"/>
    </source>
</evidence>
<evidence type="ECO:0000305" key="2"/>